<proteinExistence type="inferred from homology"/>
<organism>
    <name type="scientific">Yersinia pestis (strain Pestoides F)</name>
    <dbReference type="NCBI Taxonomy" id="386656"/>
    <lineage>
        <taxon>Bacteria</taxon>
        <taxon>Pseudomonadati</taxon>
        <taxon>Pseudomonadota</taxon>
        <taxon>Gammaproteobacteria</taxon>
        <taxon>Enterobacterales</taxon>
        <taxon>Yersiniaceae</taxon>
        <taxon>Yersinia</taxon>
    </lineage>
</organism>
<protein>
    <recommendedName>
        <fullName evidence="1">Glutathione-regulated potassium-efflux system protein KefB</fullName>
    </recommendedName>
    <alternativeName>
        <fullName evidence="1">K(+)/H(+) antiporter</fullName>
    </alternativeName>
</protein>
<accession>A4TGX5</accession>
<sequence length="602" mass="66328">MEGTGLLTAVLVFLFAAVVAVPIAQRLGIGAVLGYLIAGIAIGPWGLGFIRDVDEILHFSELGVVFLMFIIGLELNPAKLWQLRRSIFGVGAGQVVITAAVLGALLYFTQFAWQAAVIGGVGLAMSSTAMALQLMREKGMNRNEGGQLGFSVLLFQDMAVIPALALIPILAGNEGGANDWVKIGLKIAAFAGMLIGGRYLLRPLFRYIVASGVREVFTAAALLVVLGSALFMDALGLSMALGTFIAGILLAESEFQHELEIAIEPFKGLLLGLFFISVGMALDLGVLFTHLLDVLLGVLALVFIKSAILYGLARVFGLRRSVRLQFAGVLSQGGEFAFVLFSAAFSQRVLNAEQLALLLVVVTLSMMTTPLLMQVIDRILVRRYNAQEESDEKPFVEDNDPQVIIVGFGRFGQVIGRLLMANKMRITVLERDVSAVSMMRKYGYKVYYGDATELELLRAAGAEKAKAIVITCNEPEDTMALVHLCQQHFPNLHILARARGRVEAHELLQNGVKDFTRETFSSALELGRKTLLELGMHPHQAYRAQQHFRRLDMRMLRELMPQHHGDVAQISRIKEARRELEDIFQREMLHESRQLDGWDEYE</sequence>
<comment type="function">
    <text evidence="1">Pore-forming subunit of a potassium efflux system that confers protection against electrophiles. Catalyzes K(+)/H(+) antiport.</text>
</comment>
<comment type="subunit">
    <text evidence="1">Interacts with the regulatory subunit KefG.</text>
</comment>
<comment type="subcellular location">
    <subcellularLocation>
        <location evidence="1">Cell inner membrane</location>
        <topology evidence="1">Multi-pass membrane protein</topology>
    </subcellularLocation>
</comment>
<comment type="similarity">
    <text evidence="1">Belongs to the monovalent cation:proton antiporter 2 (CPA2) transporter (TC 2.A.37) family. KefB subfamily.</text>
</comment>
<gene>
    <name evidence="1" type="primary">kefB</name>
    <name type="ordered locus">YPDSF_0116</name>
</gene>
<name>KEFB_YERPP</name>
<reference key="1">
    <citation type="submission" date="2007-02" db="EMBL/GenBank/DDBJ databases">
        <title>Complete sequence of chromosome of Yersinia pestis Pestoides F.</title>
        <authorList>
            <consortium name="US DOE Joint Genome Institute"/>
            <person name="Copeland A."/>
            <person name="Lucas S."/>
            <person name="Lapidus A."/>
            <person name="Barry K."/>
            <person name="Detter J.C."/>
            <person name="Glavina del Rio T."/>
            <person name="Hammon N."/>
            <person name="Israni S."/>
            <person name="Dalin E."/>
            <person name="Tice H."/>
            <person name="Pitluck S."/>
            <person name="Di Bartolo G."/>
            <person name="Chain P."/>
            <person name="Malfatti S."/>
            <person name="Shin M."/>
            <person name="Vergez L."/>
            <person name="Schmutz J."/>
            <person name="Larimer F."/>
            <person name="Land M."/>
            <person name="Hauser L."/>
            <person name="Worsham P."/>
            <person name="Chu M."/>
            <person name="Bearden S."/>
            <person name="Garcia E."/>
            <person name="Richardson P."/>
        </authorList>
    </citation>
    <scope>NUCLEOTIDE SEQUENCE [LARGE SCALE GENOMIC DNA]</scope>
    <source>
        <strain>Pestoides F</strain>
    </source>
</reference>
<feature type="chain" id="PRO_0000301537" description="Glutathione-regulated potassium-efflux system protein KefB">
    <location>
        <begin position="1"/>
        <end position="602"/>
    </location>
</feature>
<feature type="transmembrane region" description="Helical" evidence="1">
    <location>
        <begin position="4"/>
        <end position="24"/>
    </location>
</feature>
<feature type="transmembrane region" description="Helical" evidence="1">
    <location>
        <begin position="29"/>
        <end position="49"/>
    </location>
</feature>
<feature type="transmembrane region" description="Helical" evidence="1">
    <location>
        <begin position="55"/>
        <end position="75"/>
    </location>
</feature>
<feature type="transmembrane region" description="Helical" evidence="1">
    <location>
        <begin position="87"/>
        <end position="107"/>
    </location>
</feature>
<feature type="transmembrane region" description="Helical" evidence="1">
    <location>
        <begin position="115"/>
        <end position="135"/>
    </location>
</feature>
<feature type="transmembrane region" description="Helical" evidence="1">
    <location>
        <begin position="152"/>
        <end position="172"/>
    </location>
</feature>
<feature type="transmembrane region" description="Helical" evidence="1">
    <location>
        <begin position="181"/>
        <end position="201"/>
    </location>
</feature>
<feature type="transmembrane region" description="Helical" evidence="1">
    <location>
        <begin position="207"/>
        <end position="227"/>
    </location>
</feature>
<feature type="transmembrane region" description="Helical" evidence="1">
    <location>
        <begin position="230"/>
        <end position="250"/>
    </location>
</feature>
<feature type="transmembrane region" description="Helical" evidence="1">
    <location>
        <begin position="261"/>
        <end position="281"/>
    </location>
</feature>
<feature type="transmembrane region" description="Helical" evidence="1">
    <location>
        <begin position="296"/>
        <end position="318"/>
    </location>
</feature>
<feature type="transmembrane region" description="Helical" evidence="1">
    <location>
        <begin position="326"/>
        <end position="346"/>
    </location>
</feature>
<feature type="transmembrane region" description="Helical" evidence="1">
    <location>
        <begin position="356"/>
        <end position="376"/>
    </location>
</feature>
<feature type="domain" description="RCK N-terminal" evidence="2">
    <location>
        <begin position="400"/>
        <end position="519"/>
    </location>
</feature>
<evidence type="ECO:0000255" key="1">
    <source>
        <dbReference type="HAMAP-Rule" id="MF_01412"/>
    </source>
</evidence>
<evidence type="ECO:0000255" key="2">
    <source>
        <dbReference type="PROSITE-ProRule" id="PRU00543"/>
    </source>
</evidence>
<dbReference type="EMBL" id="CP000668">
    <property type="protein sequence ID" value="ABP38538.1"/>
    <property type="molecule type" value="Genomic_DNA"/>
</dbReference>
<dbReference type="RefSeq" id="WP_002212314.1">
    <property type="nucleotide sequence ID" value="NZ_CP009715.1"/>
</dbReference>
<dbReference type="SMR" id="A4TGX5"/>
<dbReference type="GeneID" id="57974412"/>
<dbReference type="KEGG" id="ypp:YPDSF_0116"/>
<dbReference type="PATRIC" id="fig|386656.14.peg.451"/>
<dbReference type="GO" id="GO:0005886">
    <property type="term" value="C:plasma membrane"/>
    <property type="evidence" value="ECO:0007669"/>
    <property type="project" value="UniProtKB-SubCell"/>
</dbReference>
<dbReference type="GO" id="GO:0015503">
    <property type="term" value="F:glutathione-regulated potassium exporter activity"/>
    <property type="evidence" value="ECO:0007669"/>
    <property type="project" value="UniProtKB-UniRule"/>
</dbReference>
<dbReference type="GO" id="GO:1902600">
    <property type="term" value="P:proton transmembrane transport"/>
    <property type="evidence" value="ECO:0007669"/>
    <property type="project" value="InterPro"/>
</dbReference>
<dbReference type="FunFam" id="1.20.1530.20:FF:000001">
    <property type="entry name" value="Glutathione-regulated potassium-efflux system protein KefB"/>
    <property type="match status" value="1"/>
</dbReference>
<dbReference type="FunFam" id="3.40.50.720:FF:000036">
    <property type="entry name" value="Glutathione-regulated potassium-efflux system protein KefB"/>
    <property type="match status" value="1"/>
</dbReference>
<dbReference type="Gene3D" id="1.20.1530.20">
    <property type="match status" value="1"/>
</dbReference>
<dbReference type="Gene3D" id="3.40.50.720">
    <property type="entry name" value="NAD(P)-binding Rossmann-like Domain"/>
    <property type="match status" value="1"/>
</dbReference>
<dbReference type="HAMAP" id="MF_01412">
    <property type="entry name" value="K_H_efflux_KefB"/>
    <property type="match status" value="1"/>
</dbReference>
<dbReference type="InterPro" id="IPR006153">
    <property type="entry name" value="Cation/H_exchanger_TM"/>
</dbReference>
<dbReference type="InterPro" id="IPR004771">
    <property type="entry name" value="K/H_exchanger"/>
</dbReference>
<dbReference type="InterPro" id="IPR020884">
    <property type="entry name" value="K_H_efflux_KefB"/>
</dbReference>
<dbReference type="InterPro" id="IPR038770">
    <property type="entry name" value="Na+/solute_symporter_sf"/>
</dbReference>
<dbReference type="InterPro" id="IPR036291">
    <property type="entry name" value="NAD(P)-bd_dom_sf"/>
</dbReference>
<dbReference type="InterPro" id="IPR003148">
    <property type="entry name" value="RCK_N"/>
</dbReference>
<dbReference type="NCBIfam" id="TIGR00932">
    <property type="entry name" value="2a37"/>
    <property type="match status" value="1"/>
</dbReference>
<dbReference type="NCBIfam" id="NF002973">
    <property type="entry name" value="PRK03659.1"/>
    <property type="match status" value="1"/>
</dbReference>
<dbReference type="PANTHER" id="PTHR46157">
    <property type="entry name" value="K(+) EFFLUX ANTIPORTER 3, CHLOROPLASTIC"/>
    <property type="match status" value="1"/>
</dbReference>
<dbReference type="PANTHER" id="PTHR46157:SF4">
    <property type="entry name" value="K(+) EFFLUX ANTIPORTER 3, CHLOROPLASTIC"/>
    <property type="match status" value="1"/>
</dbReference>
<dbReference type="Pfam" id="PF00999">
    <property type="entry name" value="Na_H_Exchanger"/>
    <property type="match status" value="1"/>
</dbReference>
<dbReference type="Pfam" id="PF02254">
    <property type="entry name" value="TrkA_N"/>
    <property type="match status" value="1"/>
</dbReference>
<dbReference type="SUPFAM" id="SSF51735">
    <property type="entry name" value="NAD(P)-binding Rossmann-fold domains"/>
    <property type="match status" value="1"/>
</dbReference>
<dbReference type="PROSITE" id="PS51201">
    <property type="entry name" value="RCK_N"/>
    <property type="match status" value="1"/>
</dbReference>
<keyword id="KW-0050">Antiport</keyword>
<keyword id="KW-0997">Cell inner membrane</keyword>
<keyword id="KW-1003">Cell membrane</keyword>
<keyword id="KW-0406">Ion transport</keyword>
<keyword id="KW-0472">Membrane</keyword>
<keyword id="KW-0630">Potassium</keyword>
<keyword id="KW-0633">Potassium transport</keyword>
<keyword id="KW-0812">Transmembrane</keyword>
<keyword id="KW-1133">Transmembrane helix</keyword>
<keyword id="KW-0813">Transport</keyword>